<gene>
    <name evidence="1" type="primary">bioB</name>
    <name type="ordered locus">BMEA_B0469</name>
</gene>
<dbReference type="EC" id="2.8.1.6" evidence="1"/>
<dbReference type="EMBL" id="CP001489">
    <property type="protein sequence ID" value="ACO02309.1"/>
    <property type="status" value="ALT_INIT"/>
    <property type="molecule type" value="Genomic_DNA"/>
</dbReference>
<dbReference type="SMR" id="C0RL26"/>
<dbReference type="KEGG" id="bmi:BMEA_B0469"/>
<dbReference type="HOGENOM" id="CLU_033172_1_2_5"/>
<dbReference type="UniPathway" id="UPA00078">
    <property type="reaction ID" value="UER00162"/>
</dbReference>
<dbReference type="Proteomes" id="UP000001748">
    <property type="component" value="Chromosome II"/>
</dbReference>
<dbReference type="GO" id="GO:0051537">
    <property type="term" value="F:2 iron, 2 sulfur cluster binding"/>
    <property type="evidence" value="ECO:0007669"/>
    <property type="project" value="UniProtKB-KW"/>
</dbReference>
<dbReference type="GO" id="GO:0051539">
    <property type="term" value="F:4 iron, 4 sulfur cluster binding"/>
    <property type="evidence" value="ECO:0007669"/>
    <property type="project" value="UniProtKB-KW"/>
</dbReference>
<dbReference type="GO" id="GO:0004076">
    <property type="term" value="F:biotin synthase activity"/>
    <property type="evidence" value="ECO:0007669"/>
    <property type="project" value="UniProtKB-UniRule"/>
</dbReference>
<dbReference type="GO" id="GO:0005506">
    <property type="term" value="F:iron ion binding"/>
    <property type="evidence" value="ECO:0007669"/>
    <property type="project" value="UniProtKB-UniRule"/>
</dbReference>
<dbReference type="GO" id="GO:0009102">
    <property type="term" value="P:biotin biosynthetic process"/>
    <property type="evidence" value="ECO:0007669"/>
    <property type="project" value="UniProtKB-UniRule"/>
</dbReference>
<dbReference type="CDD" id="cd01335">
    <property type="entry name" value="Radical_SAM"/>
    <property type="match status" value="1"/>
</dbReference>
<dbReference type="Gene3D" id="3.20.20.70">
    <property type="entry name" value="Aldolase class I"/>
    <property type="match status" value="1"/>
</dbReference>
<dbReference type="HAMAP" id="MF_01694">
    <property type="entry name" value="BioB"/>
    <property type="match status" value="1"/>
</dbReference>
<dbReference type="InterPro" id="IPR013785">
    <property type="entry name" value="Aldolase_TIM"/>
</dbReference>
<dbReference type="InterPro" id="IPR010722">
    <property type="entry name" value="BATS_dom"/>
</dbReference>
<dbReference type="InterPro" id="IPR002684">
    <property type="entry name" value="Biotin_synth/BioAB"/>
</dbReference>
<dbReference type="InterPro" id="IPR024177">
    <property type="entry name" value="Biotin_synthase"/>
</dbReference>
<dbReference type="InterPro" id="IPR006638">
    <property type="entry name" value="Elp3/MiaA/NifB-like_rSAM"/>
</dbReference>
<dbReference type="InterPro" id="IPR007197">
    <property type="entry name" value="rSAM"/>
</dbReference>
<dbReference type="NCBIfam" id="TIGR00433">
    <property type="entry name" value="bioB"/>
    <property type="match status" value="1"/>
</dbReference>
<dbReference type="PANTHER" id="PTHR22976">
    <property type="entry name" value="BIOTIN SYNTHASE"/>
    <property type="match status" value="1"/>
</dbReference>
<dbReference type="PANTHER" id="PTHR22976:SF2">
    <property type="entry name" value="BIOTIN SYNTHASE, MITOCHONDRIAL"/>
    <property type="match status" value="1"/>
</dbReference>
<dbReference type="Pfam" id="PF06968">
    <property type="entry name" value="BATS"/>
    <property type="match status" value="1"/>
</dbReference>
<dbReference type="Pfam" id="PF04055">
    <property type="entry name" value="Radical_SAM"/>
    <property type="match status" value="1"/>
</dbReference>
<dbReference type="PIRSF" id="PIRSF001619">
    <property type="entry name" value="Biotin_synth"/>
    <property type="match status" value="1"/>
</dbReference>
<dbReference type="SFLD" id="SFLDF00272">
    <property type="entry name" value="biotin_synthase"/>
    <property type="match status" value="1"/>
</dbReference>
<dbReference type="SFLD" id="SFLDS00029">
    <property type="entry name" value="Radical_SAM"/>
    <property type="match status" value="1"/>
</dbReference>
<dbReference type="SMART" id="SM00876">
    <property type="entry name" value="BATS"/>
    <property type="match status" value="1"/>
</dbReference>
<dbReference type="SMART" id="SM00729">
    <property type="entry name" value="Elp3"/>
    <property type="match status" value="1"/>
</dbReference>
<dbReference type="SUPFAM" id="SSF102114">
    <property type="entry name" value="Radical SAM enzymes"/>
    <property type="match status" value="1"/>
</dbReference>
<dbReference type="PROSITE" id="PS51918">
    <property type="entry name" value="RADICAL_SAM"/>
    <property type="match status" value="1"/>
</dbReference>
<comment type="function">
    <text evidence="1">Catalyzes the conversion of dethiobiotin (DTB) to biotin by the insertion of a sulfur atom into dethiobiotin via a radical-based mechanism.</text>
</comment>
<comment type="catalytic activity">
    <reaction evidence="1">
        <text>(4R,5S)-dethiobiotin + (sulfur carrier)-SH + 2 reduced [2Fe-2S]-[ferredoxin] + 2 S-adenosyl-L-methionine = (sulfur carrier)-H + biotin + 2 5'-deoxyadenosine + 2 L-methionine + 2 oxidized [2Fe-2S]-[ferredoxin]</text>
        <dbReference type="Rhea" id="RHEA:22060"/>
        <dbReference type="Rhea" id="RHEA-COMP:10000"/>
        <dbReference type="Rhea" id="RHEA-COMP:10001"/>
        <dbReference type="Rhea" id="RHEA-COMP:14737"/>
        <dbReference type="Rhea" id="RHEA-COMP:14739"/>
        <dbReference type="ChEBI" id="CHEBI:17319"/>
        <dbReference type="ChEBI" id="CHEBI:29917"/>
        <dbReference type="ChEBI" id="CHEBI:33737"/>
        <dbReference type="ChEBI" id="CHEBI:33738"/>
        <dbReference type="ChEBI" id="CHEBI:57586"/>
        <dbReference type="ChEBI" id="CHEBI:57844"/>
        <dbReference type="ChEBI" id="CHEBI:59789"/>
        <dbReference type="ChEBI" id="CHEBI:64428"/>
        <dbReference type="ChEBI" id="CHEBI:149473"/>
        <dbReference type="EC" id="2.8.1.6"/>
    </reaction>
</comment>
<comment type="cofactor">
    <cofactor evidence="1">
        <name>[4Fe-4S] cluster</name>
        <dbReference type="ChEBI" id="CHEBI:49883"/>
    </cofactor>
    <text evidence="1">Binds 1 [4Fe-4S] cluster. The cluster is coordinated with 3 cysteines and an exchangeable S-adenosyl-L-methionine.</text>
</comment>
<comment type="cofactor">
    <cofactor evidence="1">
        <name>[2Fe-2S] cluster</name>
        <dbReference type="ChEBI" id="CHEBI:190135"/>
    </cofactor>
    <text evidence="1">Binds 1 [2Fe-2S] cluster. The cluster is coordinated with 3 cysteines and 1 arginine.</text>
</comment>
<comment type="pathway">
    <text evidence="1">Cofactor biosynthesis; biotin biosynthesis; biotin from 7,8-diaminononanoate: step 2/2.</text>
</comment>
<comment type="subunit">
    <text evidence="1">Homodimer.</text>
</comment>
<comment type="similarity">
    <text evidence="1">Belongs to the radical SAM superfamily. Biotin synthase family.</text>
</comment>
<comment type="sequence caution" evidence="3">
    <conflict type="erroneous initiation">
        <sequence resource="EMBL-CDS" id="ACO02309"/>
    </conflict>
</comment>
<reference key="1">
    <citation type="submission" date="2009-03" db="EMBL/GenBank/DDBJ databases">
        <title>Brucella melitensis ATCC 23457 whole genome shotgun sequencing project.</title>
        <authorList>
            <person name="Setubal J.C."/>
            <person name="Boyle S."/>
            <person name="Crasta O.R."/>
            <person name="Gillespie J.J."/>
            <person name="Kenyon R.W."/>
            <person name="Lu J."/>
            <person name="Mane S."/>
            <person name="Nagrani S."/>
            <person name="Shallom J.M."/>
            <person name="Shallom S."/>
            <person name="Shukla M."/>
            <person name="Snyder E.E."/>
            <person name="Sobral B.W."/>
            <person name="Wattam A.R."/>
            <person name="Will R."/>
            <person name="Williams K."/>
            <person name="Yoo H."/>
            <person name="Munk C."/>
            <person name="Tapia R."/>
            <person name="Han C."/>
            <person name="Detter J.C."/>
            <person name="Bruce D."/>
            <person name="Brettin T.S."/>
        </authorList>
    </citation>
    <scope>NUCLEOTIDE SEQUENCE [LARGE SCALE GENOMIC DNA]</scope>
    <source>
        <strain>ATCC 23457</strain>
    </source>
</reference>
<sequence length="328" mass="35653">MPDRGGENGASCSVGRWSAEEARAIYNLPFNDLLFRAHGLHRENFDPNRIQLSKLLNIKTGGCPEDCGYCSQSASAENGLKASKLMEIETVLEEARKAKAAGATRYCMGAAWRSPKDRDMPALTHMIESVKAMGLETCMTLGMLDSDKAEKLADAGLDYYNHNIDTSERFYPAVITTRSFEDRLDTLANVRNAGIKVCSGGILGLGEEAEDRIDMLVTLANLPEPPESVPINMLIPMPGTRLAKAAPVDPLEFVRVVALARILMPKSHVRLTAGRTAMSDEMQALCFFAGANSLFMGDTLLTAANPGDDRDSSLLRRLGIQAETEQPA</sequence>
<name>BIOB_BRUMB</name>
<organism>
    <name type="scientific">Brucella melitensis biotype 2 (strain ATCC 23457)</name>
    <dbReference type="NCBI Taxonomy" id="546272"/>
    <lineage>
        <taxon>Bacteria</taxon>
        <taxon>Pseudomonadati</taxon>
        <taxon>Pseudomonadota</taxon>
        <taxon>Alphaproteobacteria</taxon>
        <taxon>Hyphomicrobiales</taxon>
        <taxon>Brucellaceae</taxon>
        <taxon>Brucella/Ochrobactrum group</taxon>
        <taxon>Brucella</taxon>
    </lineage>
</organism>
<evidence type="ECO:0000255" key="1">
    <source>
        <dbReference type="HAMAP-Rule" id="MF_01694"/>
    </source>
</evidence>
<evidence type="ECO:0000255" key="2">
    <source>
        <dbReference type="PROSITE-ProRule" id="PRU01266"/>
    </source>
</evidence>
<evidence type="ECO:0000305" key="3"/>
<feature type="chain" id="PRO_0000381251" description="Biotin synthase">
    <location>
        <begin position="1"/>
        <end position="328"/>
    </location>
</feature>
<feature type="domain" description="Radical SAM core" evidence="2">
    <location>
        <begin position="48"/>
        <end position="275"/>
    </location>
</feature>
<feature type="binding site" evidence="1">
    <location>
        <position position="63"/>
    </location>
    <ligand>
        <name>[4Fe-4S] cluster</name>
        <dbReference type="ChEBI" id="CHEBI:49883"/>
        <note>4Fe-4S-S-AdoMet</note>
    </ligand>
</feature>
<feature type="binding site" evidence="1">
    <location>
        <position position="67"/>
    </location>
    <ligand>
        <name>[4Fe-4S] cluster</name>
        <dbReference type="ChEBI" id="CHEBI:49883"/>
        <note>4Fe-4S-S-AdoMet</note>
    </ligand>
</feature>
<feature type="binding site" evidence="1">
    <location>
        <position position="70"/>
    </location>
    <ligand>
        <name>[4Fe-4S] cluster</name>
        <dbReference type="ChEBI" id="CHEBI:49883"/>
        <note>4Fe-4S-S-AdoMet</note>
    </ligand>
</feature>
<feature type="binding site" evidence="1">
    <location>
        <position position="107"/>
    </location>
    <ligand>
        <name>[2Fe-2S] cluster</name>
        <dbReference type="ChEBI" id="CHEBI:190135"/>
    </ligand>
</feature>
<feature type="binding site" evidence="1">
    <location>
        <position position="138"/>
    </location>
    <ligand>
        <name>[2Fe-2S] cluster</name>
        <dbReference type="ChEBI" id="CHEBI:190135"/>
    </ligand>
</feature>
<feature type="binding site" evidence="1">
    <location>
        <position position="198"/>
    </location>
    <ligand>
        <name>[2Fe-2S] cluster</name>
        <dbReference type="ChEBI" id="CHEBI:190135"/>
    </ligand>
</feature>
<feature type="binding site" evidence="1">
    <location>
        <position position="270"/>
    </location>
    <ligand>
        <name>[2Fe-2S] cluster</name>
        <dbReference type="ChEBI" id="CHEBI:190135"/>
    </ligand>
</feature>
<proteinExistence type="inferred from homology"/>
<protein>
    <recommendedName>
        <fullName evidence="1">Biotin synthase</fullName>
        <ecNumber evidence="1">2.8.1.6</ecNumber>
    </recommendedName>
</protein>
<accession>C0RL26</accession>
<keyword id="KW-0001">2Fe-2S</keyword>
<keyword id="KW-0004">4Fe-4S</keyword>
<keyword id="KW-0093">Biotin biosynthesis</keyword>
<keyword id="KW-0408">Iron</keyword>
<keyword id="KW-0411">Iron-sulfur</keyword>
<keyword id="KW-0479">Metal-binding</keyword>
<keyword id="KW-0949">S-adenosyl-L-methionine</keyword>
<keyword id="KW-0808">Transferase</keyword>